<keyword id="KW-1185">Reference proteome</keyword>
<keyword id="KW-0678">Repressor</keyword>
<keyword id="KW-0687">Ribonucleoprotein</keyword>
<keyword id="KW-0689">Ribosomal protein</keyword>
<keyword id="KW-0694">RNA-binding</keyword>
<keyword id="KW-0699">rRNA-binding</keyword>
<keyword id="KW-0810">Translation regulation</keyword>
<keyword id="KW-0820">tRNA-binding</keyword>
<name>RL1_SYNPW</name>
<evidence type="ECO:0000255" key="1">
    <source>
        <dbReference type="HAMAP-Rule" id="MF_01318"/>
    </source>
</evidence>
<evidence type="ECO:0000305" key="2"/>
<gene>
    <name evidence="1" type="primary">rplA</name>
    <name evidence="1" type="synonym">rpl1</name>
    <name type="ordered locus">SynWH7803_2373</name>
</gene>
<feature type="chain" id="PRO_0000308131" description="Large ribosomal subunit protein uL1">
    <location>
        <begin position="1"/>
        <end position="235"/>
    </location>
</feature>
<reference key="1">
    <citation type="submission" date="2006-05" db="EMBL/GenBank/DDBJ databases">
        <authorList>
            <consortium name="Genoscope"/>
        </authorList>
    </citation>
    <scope>NUCLEOTIDE SEQUENCE [LARGE SCALE GENOMIC DNA]</scope>
    <source>
        <strain>WH7803</strain>
    </source>
</reference>
<comment type="function">
    <text evidence="1">Binds directly to 23S rRNA. The L1 stalk is quite mobile in the ribosome, and is involved in E site tRNA release.</text>
</comment>
<comment type="function">
    <text evidence="1">Protein L1 is also a translational repressor protein, it controls the translation of the L11 operon by binding to its mRNA.</text>
</comment>
<comment type="subunit">
    <text evidence="1">Part of the 50S ribosomal subunit.</text>
</comment>
<comment type="similarity">
    <text evidence="1">Belongs to the universal ribosomal protein uL1 family.</text>
</comment>
<protein>
    <recommendedName>
        <fullName evidence="1">Large ribosomal subunit protein uL1</fullName>
    </recommendedName>
    <alternativeName>
        <fullName evidence="2">50S ribosomal protein L1</fullName>
    </alternativeName>
</protein>
<proteinExistence type="inferred from homology"/>
<sequence length="235" mass="25474">MPKTSKRLASLVNKIEERAYEPLEAIKLVKENATAKFDETVEAHARLGIDPKYTDQQLRTTVALPHGTGQTVRIAVITRGEKVAEAKAAGAELAGDEDLVETISKGEMDFDLLIATPDMMPKVAKLGRVLGPRGLMPNPKAGTVTTDLAAAINEFKAGKLEFRADRTGIVHVRFGKASFSEGNLLDNLKTLQETIDRNKPSGAKGRYWKSLYVTSTMGPSVEVDIAALQDINKDG</sequence>
<organism>
    <name type="scientific">Synechococcus sp. (strain WH7803)</name>
    <dbReference type="NCBI Taxonomy" id="32051"/>
    <lineage>
        <taxon>Bacteria</taxon>
        <taxon>Bacillati</taxon>
        <taxon>Cyanobacteriota</taxon>
        <taxon>Cyanophyceae</taxon>
        <taxon>Synechococcales</taxon>
        <taxon>Synechococcaceae</taxon>
        <taxon>Synechococcus</taxon>
    </lineage>
</organism>
<accession>A5GPD4</accession>
<dbReference type="EMBL" id="CT971583">
    <property type="protein sequence ID" value="CAK24799.1"/>
    <property type="molecule type" value="Genomic_DNA"/>
</dbReference>
<dbReference type="SMR" id="A5GPD4"/>
<dbReference type="STRING" id="32051.SynWH7803_2373"/>
<dbReference type="KEGG" id="syx:SynWH7803_2373"/>
<dbReference type="eggNOG" id="COG0081">
    <property type="taxonomic scope" value="Bacteria"/>
</dbReference>
<dbReference type="HOGENOM" id="CLU_062853_0_0_3"/>
<dbReference type="OrthoDB" id="9803740at2"/>
<dbReference type="Proteomes" id="UP000001566">
    <property type="component" value="Chromosome"/>
</dbReference>
<dbReference type="GO" id="GO:0015934">
    <property type="term" value="C:large ribosomal subunit"/>
    <property type="evidence" value="ECO:0007669"/>
    <property type="project" value="InterPro"/>
</dbReference>
<dbReference type="GO" id="GO:0019843">
    <property type="term" value="F:rRNA binding"/>
    <property type="evidence" value="ECO:0007669"/>
    <property type="project" value="UniProtKB-UniRule"/>
</dbReference>
<dbReference type="GO" id="GO:0003735">
    <property type="term" value="F:structural constituent of ribosome"/>
    <property type="evidence" value="ECO:0007669"/>
    <property type="project" value="InterPro"/>
</dbReference>
<dbReference type="GO" id="GO:0000049">
    <property type="term" value="F:tRNA binding"/>
    <property type="evidence" value="ECO:0007669"/>
    <property type="project" value="UniProtKB-KW"/>
</dbReference>
<dbReference type="GO" id="GO:0006417">
    <property type="term" value="P:regulation of translation"/>
    <property type="evidence" value="ECO:0007669"/>
    <property type="project" value="UniProtKB-KW"/>
</dbReference>
<dbReference type="GO" id="GO:0006412">
    <property type="term" value="P:translation"/>
    <property type="evidence" value="ECO:0007669"/>
    <property type="project" value="UniProtKB-UniRule"/>
</dbReference>
<dbReference type="CDD" id="cd00403">
    <property type="entry name" value="Ribosomal_L1"/>
    <property type="match status" value="1"/>
</dbReference>
<dbReference type="FunFam" id="3.40.50.790:FF:000001">
    <property type="entry name" value="50S ribosomal protein L1"/>
    <property type="match status" value="1"/>
</dbReference>
<dbReference type="Gene3D" id="3.30.190.20">
    <property type="match status" value="1"/>
</dbReference>
<dbReference type="Gene3D" id="3.40.50.790">
    <property type="match status" value="1"/>
</dbReference>
<dbReference type="HAMAP" id="MF_01318_B">
    <property type="entry name" value="Ribosomal_uL1_B"/>
    <property type="match status" value="1"/>
</dbReference>
<dbReference type="InterPro" id="IPR005878">
    <property type="entry name" value="Ribosom_uL1_bac-type"/>
</dbReference>
<dbReference type="InterPro" id="IPR002143">
    <property type="entry name" value="Ribosomal_uL1"/>
</dbReference>
<dbReference type="InterPro" id="IPR023674">
    <property type="entry name" value="Ribosomal_uL1-like"/>
</dbReference>
<dbReference type="InterPro" id="IPR028364">
    <property type="entry name" value="Ribosomal_uL1/biogenesis"/>
</dbReference>
<dbReference type="InterPro" id="IPR016095">
    <property type="entry name" value="Ribosomal_uL1_3-a/b-sand"/>
</dbReference>
<dbReference type="InterPro" id="IPR023673">
    <property type="entry name" value="Ribosomal_uL1_CS"/>
</dbReference>
<dbReference type="NCBIfam" id="TIGR01169">
    <property type="entry name" value="rplA_bact"/>
    <property type="match status" value="1"/>
</dbReference>
<dbReference type="PANTHER" id="PTHR36427">
    <property type="entry name" value="54S RIBOSOMAL PROTEIN L1, MITOCHONDRIAL"/>
    <property type="match status" value="1"/>
</dbReference>
<dbReference type="PANTHER" id="PTHR36427:SF3">
    <property type="entry name" value="LARGE RIBOSOMAL SUBUNIT PROTEIN UL1M"/>
    <property type="match status" value="1"/>
</dbReference>
<dbReference type="Pfam" id="PF00687">
    <property type="entry name" value="Ribosomal_L1"/>
    <property type="match status" value="1"/>
</dbReference>
<dbReference type="PIRSF" id="PIRSF002155">
    <property type="entry name" value="Ribosomal_L1"/>
    <property type="match status" value="1"/>
</dbReference>
<dbReference type="SUPFAM" id="SSF56808">
    <property type="entry name" value="Ribosomal protein L1"/>
    <property type="match status" value="1"/>
</dbReference>
<dbReference type="PROSITE" id="PS01199">
    <property type="entry name" value="RIBOSOMAL_L1"/>
    <property type="match status" value="1"/>
</dbReference>